<feature type="chain" id="PRO_0000128230" description="Pantothenate synthetase">
    <location>
        <begin position="1"/>
        <end position="283"/>
    </location>
</feature>
<feature type="active site" description="Proton donor" evidence="1">
    <location>
        <position position="37"/>
    </location>
</feature>
<feature type="binding site" evidence="1">
    <location>
        <begin position="30"/>
        <end position="37"/>
    </location>
    <ligand>
        <name>ATP</name>
        <dbReference type="ChEBI" id="CHEBI:30616"/>
    </ligand>
</feature>
<feature type="binding site" evidence="1">
    <location>
        <position position="61"/>
    </location>
    <ligand>
        <name>(R)-pantoate</name>
        <dbReference type="ChEBI" id="CHEBI:15980"/>
    </ligand>
</feature>
<feature type="binding site" evidence="1">
    <location>
        <position position="61"/>
    </location>
    <ligand>
        <name>beta-alanine</name>
        <dbReference type="ChEBI" id="CHEBI:57966"/>
    </ligand>
</feature>
<feature type="binding site" evidence="1">
    <location>
        <begin position="149"/>
        <end position="152"/>
    </location>
    <ligand>
        <name>ATP</name>
        <dbReference type="ChEBI" id="CHEBI:30616"/>
    </ligand>
</feature>
<feature type="binding site" evidence="1">
    <location>
        <position position="155"/>
    </location>
    <ligand>
        <name>(R)-pantoate</name>
        <dbReference type="ChEBI" id="CHEBI:15980"/>
    </ligand>
</feature>
<feature type="binding site" evidence="1">
    <location>
        <begin position="186"/>
        <end position="189"/>
    </location>
    <ligand>
        <name>ATP</name>
        <dbReference type="ChEBI" id="CHEBI:30616"/>
    </ligand>
</feature>
<proteinExistence type="inferred from homology"/>
<keyword id="KW-0067">ATP-binding</keyword>
<keyword id="KW-0963">Cytoplasm</keyword>
<keyword id="KW-0436">Ligase</keyword>
<keyword id="KW-0547">Nucleotide-binding</keyword>
<keyword id="KW-0566">Pantothenate biosynthesis</keyword>
<keyword id="KW-1185">Reference proteome</keyword>
<sequence length="283" mass="31568">MLIIETLPLLRQQIRRLRMEGKRVALVPTMGNLHDGHMKLVDEAKARADVVVVSIFVNPMQFDRPEDLARYPRTLQEDCEKLNKRKVDLVFAPSVKEIYPNGTETHTYVDVPGLSTMLEGASRPGHFRGVSTIVSKLFNLVQPDIACFGEKDFQQLALIRKMVADMGFDIEIVGVPIMRAKDGLALSSRNGYLTAEQRKIAPGLYKVLSSIADKLQAGERDLDEIIAIAGQELNEKGFRADDIQIRDADTLLEVSETSKRAVILVAAWLGDARLIDNKMVELA</sequence>
<comment type="function">
    <text evidence="1">Catalyzes the condensation of pantoate with beta-alanine in an ATP-dependent reaction via a pantoyl-adenylate intermediate.</text>
</comment>
<comment type="catalytic activity">
    <reaction evidence="1">
        <text>(R)-pantoate + beta-alanine + ATP = (R)-pantothenate + AMP + diphosphate + H(+)</text>
        <dbReference type="Rhea" id="RHEA:10912"/>
        <dbReference type="ChEBI" id="CHEBI:15378"/>
        <dbReference type="ChEBI" id="CHEBI:15980"/>
        <dbReference type="ChEBI" id="CHEBI:29032"/>
        <dbReference type="ChEBI" id="CHEBI:30616"/>
        <dbReference type="ChEBI" id="CHEBI:33019"/>
        <dbReference type="ChEBI" id="CHEBI:57966"/>
        <dbReference type="ChEBI" id="CHEBI:456215"/>
        <dbReference type="EC" id="6.3.2.1"/>
    </reaction>
</comment>
<comment type="pathway">
    <text evidence="1">Cofactor biosynthesis; (R)-pantothenate biosynthesis; (R)-pantothenate from (R)-pantoate and beta-alanine: step 1/1.</text>
</comment>
<comment type="subunit">
    <text evidence="1">Homodimer.</text>
</comment>
<comment type="subcellular location">
    <subcellularLocation>
        <location evidence="1">Cytoplasm</location>
    </subcellularLocation>
</comment>
<comment type="miscellaneous">
    <text evidence="1">The reaction proceeds by a bi uni uni bi ping pong mechanism.</text>
</comment>
<comment type="similarity">
    <text evidence="1">Belongs to the pantothenate synthetase family.</text>
</comment>
<name>PANC_ECO57</name>
<organism>
    <name type="scientific">Escherichia coli O157:H7</name>
    <dbReference type="NCBI Taxonomy" id="83334"/>
    <lineage>
        <taxon>Bacteria</taxon>
        <taxon>Pseudomonadati</taxon>
        <taxon>Pseudomonadota</taxon>
        <taxon>Gammaproteobacteria</taxon>
        <taxon>Enterobacterales</taxon>
        <taxon>Enterobacteriaceae</taxon>
        <taxon>Escherichia</taxon>
    </lineage>
</organism>
<protein>
    <recommendedName>
        <fullName evidence="1">Pantothenate synthetase</fullName>
        <shortName evidence="1">PS</shortName>
        <ecNumber evidence="1">6.3.2.1</ecNumber>
    </recommendedName>
    <alternativeName>
        <fullName evidence="1">Pantoate--beta-alanine ligase</fullName>
    </alternativeName>
    <alternativeName>
        <fullName evidence="1">Pantoate-activating enzyme</fullName>
    </alternativeName>
</protein>
<evidence type="ECO:0000255" key="1">
    <source>
        <dbReference type="HAMAP-Rule" id="MF_00158"/>
    </source>
</evidence>
<dbReference type="EC" id="6.3.2.1" evidence="1"/>
<dbReference type="EMBL" id="AE005174">
    <property type="protein sequence ID" value="AAG54437.1"/>
    <property type="molecule type" value="Genomic_DNA"/>
</dbReference>
<dbReference type="EMBL" id="BA000007">
    <property type="protein sequence ID" value="BAB33560.1"/>
    <property type="molecule type" value="Genomic_DNA"/>
</dbReference>
<dbReference type="PIR" id="A85497">
    <property type="entry name" value="A85497"/>
</dbReference>
<dbReference type="PIR" id="A99646">
    <property type="entry name" value="A99646"/>
</dbReference>
<dbReference type="RefSeq" id="NP_308164.1">
    <property type="nucleotide sequence ID" value="NC_002695.1"/>
</dbReference>
<dbReference type="RefSeq" id="WP_000905372.1">
    <property type="nucleotide sequence ID" value="NZ_VOAI01000002.1"/>
</dbReference>
<dbReference type="SMR" id="Q8X930"/>
<dbReference type="STRING" id="155864.Z0144"/>
<dbReference type="GeneID" id="75170033"/>
<dbReference type="GeneID" id="913734"/>
<dbReference type="KEGG" id="ece:Z0144"/>
<dbReference type="KEGG" id="ecs:ECs_0137"/>
<dbReference type="PATRIC" id="fig|386585.9.peg.237"/>
<dbReference type="eggNOG" id="COG0414">
    <property type="taxonomic scope" value="Bacteria"/>
</dbReference>
<dbReference type="HOGENOM" id="CLU_047148_0_0_6"/>
<dbReference type="OMA" id="CNHKLEP"/>
<dbReference type="UniPathway" id="UPA00028">
    <property type="reaction ID" value="UER00005"/>
</dbReference>
<dbReference type="Proteomes" id="UP000000558">
    <property type="component" value="Chromosome"/>
</dbReference>
<dbReference type="Proteomes" id="UP000002519">
    <property type="component" value="Chromosome"/>
</dbReference>
<dbReference type="GO" id="GO:0005829">
    <property type="term" value="C:cytosol"/>
    <property type="evidence" value="ECO:0007669"/>
    <property type="project" value="TreeGrafter"/>
</dbReference>
<dbReference type="GO" id="GO:0005524">
    <property type="term" value="F:ATP binding"/>
    <property type="evidence" value="ECO:0007669"/>
    <property type="project" value="UniProtKB-KW"/>
</dbReference>
<dbReference type="GO" id="GO:0004592">
    <property type="term" value="F:pantoate-beta-alanine ligase activity"/>
    <property type="evidence" value="ECO:0007669"/>
    <property type="project" value="UniProtKB-UniRule"/>
</dbReference>
<dbReference type="GO" id="GO:0015940">
    <property type="term" value="P:pantothenate biosynthetic process"/>
    <property type="evidence" value="ECO:0007669"/>
    <property type="project" value="UniProtKB-UniRule"/>
</dbReference>
<dbReference type="CDD" id="cd00560">
    <property type="entry name" value="PanC"/>
    <property type="match status" value="1"/>
</dbReference>
<dbReference type="FunFam" id="3.30.1300.10:FF:000001">
    <property type="entry name" value="Pantothenate synthetase"/>
    <property type="match status" value="1"/>
</dbReference>
<dbReference type="FunFam" id="3.40.50.620:FF:000013">
    <property type="entry name" value="Pantothenate synthetase"/>
    <property type="match status" value="1"/>
</dbReference>
<dbReference type="Gene3D" id="3.40.50.620">
    <property type="entry name" value="HUPs"/>
    <property type="match status" value="1"/>
</dbReference>
<dbReference type="Gene3D" id="3.30.1300.10">
    <property type="entry name" value="Pantoate-beta-alanine ligase, C-terminal domain"/>
    <property type="match status" value="1"/>
</dbReference>
<dbReference type="HAMAP" id="MF_00158">
    <property type="entry name" value="PanC"/>
    <property type="match status" value="1"/>
</dbReference>
<dbReference type="InterPro" id="IPR004821">
    <property type="entry name" value="Cyt_trans-like"/>
</dbReference>
<dbReference type="InterPro" id="IPR003721">
    <property type="entry name" value="Pantoate_ligase"/>
</dbReference>
<dbReference type="InterPro" id="IPR042176">
    <property type="entry name" value="Pantoate_ligase_C"/>
</dbReference>
<dbReference type="InterPro" id="IPR014729">
    <property type="entry name" value="Rossmann-like_a/b/a_fold"/>
</dbReference>
<dbReference type="NCBIfam" id="TIGR00125">
    <property type="entry name" value="cyt_tran_rel"/>
    <property type="match status" value="1"/>
</dbReference>
<dbReference type="NCBIfam" id="TIGR00018">
    <property type="entry name" value="panC"/>
    <property type="match status" value="1"/>
</dbReference>
<dbReference type="PANTHER" id="PTHR21299">
    <property type="entry name" value="CYTIDYLATE KINASE/PANTOATE-BETA-ALANINE LIGASE"/>
    <property type="match status" value="1"/>
</dbReference>
<dbReference type="PANTHER" id="PTHR21299:SF1">
    <property type="entry name" value="PANTOATE--BETA-ALANINE LIGASE"/>
    <property type="match status" value="1"/>
</dbReference>
<dbReference type="Pfam" id="PF02569">
    <property type="entry name" value="Pantoate_ligase"/>
    <property type="match status" value="1"/>
</dbReference>
<dbReference type="SUPFAM" id="SSF52374">
    <property type="entry name" value="Nucleotidylyl transferase"/>
    <property type="match status" value="1"/>
</dbReference>
<reference key="1">
    <citation type="journal article" date="2001" name="Nature">
        <title>Genome sequence of enterohaemorrhagic Escherichia coli O157:H7.</title>
        <authorList>
            <person name="Perna N.T."/>
            <person name="Plunkett G. III"/>
            <person name="Burland V."/>
            <person name="Mau B."/>
            <person name="Glasner J.D."/>
            <person name="Rose D.J."/>
            <person name="Mayhew G.F."/>
            <person name="Evans P.S."/>
            <person name="Gregor J."/>
            <person name="Kirkpatrick H.A."/>
            <person name="Posfai G."/>
            <person name="Hackett J."/>
            <person name="Klink S."/>
            <person name="Boutin A."/>
            <person name="Shao Y."/>
            <person name="Miller L."/>
            <person name="Grotbeck E.J."/>
            <person name="Davis N.W."/>
            <person name="Lim A."/>
            <person name="Dimalanta E.T."/>
            <person name="Potamousis K."/>
            <person name="Apodaca J."/>
            <person name="Anantharaman T.S."/>
            <person name="Lin J."/>
            <person name="Yen G."/>
            <person name="Schwartz D.C."/>
            <person name="Welch R.A."/>
            <person name="Blattner F.R."/>
        </authorList>
    </citation>
    <scope>NUCLEOTIDE SEQUENCE [LARGE SCALE GENOMIC DNA]</scope>
    <source>
        <strain>O157:H7 / EDL933 / ATCC 700927 / EHEC</strain>
    </source>
</reference>
<reference key="2">
    <citation type="journal article" date="2001" name="DNA Res.">
        <title>Complete genome sequence of enterohemorrhagic Escherichia coli O157:H7 and genomic comparison with a laboratory strain K-12.</title>
        <authorList>
            <person name="Hayashi T."/>
            <person name="Makino K."/>
            <person name="Ohnishi M."/>
            <person name="Kurokawa K."/>
            <person name="Ishii K."/>
            <person name="Yokoyama K."/>
            <person name="Han C.-G."/>
            <person name="Ohtsubo E."/>
            <person name="Nakayama K."/>
            <person name="Murata T."/>
            <person name="Tanaka M."/>
            <person name="Tobe T."/>
            <person name="Iida T."/>
            <person name="Takami H."/>
            <person name="Honda T."/>
            <person name="Sasakawa C."/>
            <person name="Ogasawara N."/>
            <person name="Yasunaga T."/>
            <person name="Kuhara S."/>
            <person name="Shiba T."/>
            <person name="Hattori M."/>
            <person name="Shinagawa H."/>
        </authorList>
    </citation>
    <scope>NUCLEOTIDE SEQUENCE [LARGE SCALE GENOMIC DNA]</scope>
    <source>
        <strain>O157:H7 / Sakai / RIMD 0509952 / EHEC</strain>
    </source>
</reference>
<gene>
    <name evidence="1" type="primary">panC</name>
    <name type="ordered locus">Z0144</name>
    <name type="ordered locus">ECs0137</name>
</gene>
<accession>Q8X930</accession>